<dbReference type="EC" id="2.3.2.23"/>
<dbReference type="EMBL" id="AB026636">
    <property type="protein sequence ID" value="BAA94978.1"/>
    <property type="molecule type" value="Genomic_DNA"/>
</dbReference>
<dbReference type="EMBL" id="CP002686">
    <property type="protein sequence ID" value="AEE75893.1"/>
    <property type="molecule type" value="Genomic_DNA"/>
</dbReference>
<dbReference type="EMBL" id="AF386935">
    <property type="protein sequence ID" value="AAK62380.1"/>
    <property type="molecule type" value="mRNA"/>
</dbReference>
<dbReference type="EMBL" id="BT020530">
    <property type="protein sequence ID" value="AAW52556.1"/>
    <property type="molecule type" value="mRNA"/>
</dbReference>
<dbReference type="EMBL" id="DQ027045">
    <property type="protein sequence ID" value="AAY44871.1"/>
    <property type="molecule type" value="mRNA"/>
</dbReference>
<dbReference type="RefSeq" id="NP_566563.1">
    <property type="nucleotide sequence ID" value="NM_112576.3"/>
</dbReference>
<dbReference type="SMR" id="Q9LSP7"/>
<dbReference type="BioGRID" id="6289">
    <property type="interactions" value="244"/>
</dbReference>
<dbReference type="FunCoup" id="Q9LSP7">
    <property type="interactions" value="2727"/>
</dbReference>
<dbReference type="IntAct" id="Q9LSP7">
    <property type="interactions" value="244"/>
</dbReference>
<dbReference type="STRING" id="3702.Q9LSP7"/>
<dbReference type="TCDB" id="3.A.16.1.5">
    <property type="family name" value="the endoplasmic reticular retrotranslocon (er-rt) family"/>
</dbReference>
<dbReference type="PaxDb" id="3702-AT3G17000.1"/>
<dbReference type="ProteomicsDB" id="228596"/>
<dbReference type="EnsemblPlants" id="AT3G17000.1">
    <property type="protein sequence ID" value="AT3G17000.1"/>
    <property type="gene ID" value="AT3G17000"/>
</dbReference>
<dbReference type="GeneID" id="820956"/>
<dbReference type="Gramene" id="AT3G17000.1">
    <property type="protein sequence ID" value="AT3G17000.1"/>
    <property type="gene ID" value="AT3G17000"/>
</dbReference>
<dbReference type="KEGG" id="ath:AT3G17000"/>
<dbReference type="Araport" id="AT3G17000"/>
<dbReference type="TAIR" id="AT3G17000">
    <property type="gene designation" value="UBC32"/>
</dbReference>
<dbReference type="eggNOG" id="KOG0428">
    <property type="taxonomic scope" value="Eukaryota"/>
</dbReference>
<dbReference type="HOGENOM" id="CLU_041481_0_0_1"/>
<dbReference type="InParanoid" id="Q9LSP7"/>
<dbReference type="OMA" id="YPKDERR"/>
<dbReference type="PhylomeDB" id="Q9LSP7"/>
<dbReference type="UniPathway" id="UPA00143"/>
<dbReference type="PRO" id="PR:Q9LSP7"/>
<dbReference type="Proteomes" id="UP000006548">
    <property type="component" value="Chromosome 3"/>
</dbReference>
<dbReference type="ExpressionAtlas" id="Q9LSP7">
    <property type="expression patterns" value="baseline and differential"/>
</dbReference>
<dbReference type="GO" id="GO:0005783">
    <property type="term" value="C:endoplasmic reticulum"/>
    <property type="evidence" value="ECO:0000314"/>
    <property type="project" value="TAIR"/>
</dbReference>
<dbReference type="GO" id="GO:0016020">
    <property type="term" value="C:membrane"/>
    <property type="evidence" value="ECO:0000314"/>
    <property type="project" value="TAIR"/>
</dbReference>
<dbReference type="GO" id="GO:0048471">
    <property type="term" value="C:perinuclear region of cytoplasm"/>
    <property type="evidence" value="ECO:0000314"/>
    <property type="project" value="TAIR"/>
</dbReference>
<dbReference type="GO" id="GO:0005524">
    <property type="term" value="F:ATP binding"/>
    <property type="evidence" value="ECO:0007669"/>
    <property type="project" value="UniProtKB-KW"/>
</dbReference>
<dbReference type="GO" id="GO:0061631">
    <property type="term" value="F:ubiquitin conjugating enzyme activity"/>
    <property type="evidence" value="ECO:0007669"/>
    <property type="project" value="UniProtKB-EC"/>
</dbReference>
<dbReference type="GO" id="GO:0004842">
    <property type="term" value="F:ubiquitin-protein transferase activity"/>
    <property type="evidence" value="ECO:0000314"/>
    <property type="project" value="TAIR"/>
</dbReference>
<dbReference type="GO" id="GO:0042631">
    <property type="term" value="P:cellular response to water deprivation"/>
    <property type="evidence" value="ECO:0000316"/>
    <property type="project" value="TAIR"/>
</dbReference>
<dbReference type="GO" id="GO:1902457">
    <property type="term" value="P:negative regulation of stomatal opening"/>
    <property type="evidence" value="ECO:0000316"/>
    <property type="project" value="TAIR"/>
</dbReference>
<dbReference type="GO" id="GO:0016567">
    <property type="term" value="P:protein ubiquitination"/>
    <property type="evidence" value="ECO:0007669"/>
    <property type="project" value="UniProtKB-UniPathway"/>
</dbReference>
<dbReference type="GO" id="GO:0006511">
    <property type="term" value="P:ubiquitin-dependent protein catabolic process"/>
    <property type="evidence" value="ECO:0000314"/>
    <property type="project" value="TAIR"/>
</dbReference>
<dbReference type="CDD" id="cd23799">
    <property type="entry name" value="UBCc_UBE2J"/>
    <property type="match status" value="1"/>
</dbReference>
<dbReference type="FunFam" id="3.10.110.10:FF:000056">
    <property type="entry name" value="ubiquitin-conjugating enzyme E2 32"/>
    <property type="match status" value="1"/>
</dbReference>
<dbReference type="Gene3D" id="3.10.110.10">
    <property type="entry name" value="Ubiquitin Conjugating Enzyme"/>
    <property type="match status" value="1"/>
</dbReference>
<dbReference type="InterPro" id="IPR050113">
    <property type="entry name" value="Ub_conjugating_enzyme"/>
</dbReference>
<dbReference type="InterPro" id="IPR000608">
    <property type="entry name" value="UBQ-conjugat_E2_core"/>
</dbReference>
<dbReference type="InterPro" id="IPR016135">
    <property type="entry name" value="UBQ-conjugating_enzyme/RWD"/>
</dbReference>
<dbReference type="PANTHER" id="PTHR24067">
    <property type="entry name" value="UBIQUITIN-CONJUGATING ENZYME E2"/>
    <property type="match status" value="1"/>
</dbReference>
<dbReference type="Pfam" id="PF00179">
    <property type="entry name" value="UQ_con"/>
    <property type="match status" value="1"/>
</dbReference>
<dbReference type="SMART" id="SM00212">
    <property type="entry name" value="UBCc"/>
    <property type="match status" value="1"/>
</dbReference>
<dbReference type="SUPFAM" id="SSF54495">
    <property type="entry name" value="UBC-like"/>
    <property type="match status" value="1"/>
</dbReference>
<dbReference type="PROSITE" id="PS50127">
    <property type="entry name" value="UBC_2"/>
    <property type="match status" value="1"/>
</dbReference>
<protein>
    <recommendedName>
        <fullName>Ubiquitin-conjugating enzyme E2 32</fullName>
        <ecNumber>2.3.2.23</ecNumber>
    </recommendedName>
    <alternativeName>
        <fullName>E2 ubiquitin-conjugating enzyme 32</fullName>
    </alternativeName>
    <alternativeName>
        <fullName>Ubiquitin carrier protein 32</fullName>
    </alternativeName>
</protein>
<feature type="chain" id="PRO_0000345197" description="Ubiquitin-conjugating enzyme E2 32">
    <location>
        <begin position="1"/>
        <end position="309"/>
    </location>
</feature>
<feature type="transmembrane region" description="Helical" evidence="2">
    <location>
        <begin position="275"/>
        <end position="295"/>
    </location>
</feature>
<feature type="domain" description="UBC core" evidence="3">
    <location>
        <begin position="11"/>
        <end position="166"/>
    </location>
</feature>
<feature type="active site" description="Glycyl thioester intermediate" evidence="3">
    <location>
        <position position="93"/>
    </location>
</feature>
<proteinExistence type="evidence at transcript level"/>
<organism>
    <name type="scientific">Arabidopsis thaliana</name>
    <name type="common">Mouse-ear cress</name>
    <dbReference type="NCBI Taxonomy" id="3702"/>
    <lineage>
        <taxon>Eukaryota</taxon>
        <taxon>Viridiplantae</taxon>
        <taxon>Streptophyta</taxon>
        <taxon>Embryophyta</taxon>
        <taxon>Tracheophyta</taxon>
        <taxon>Spermatophyta</taxon>
        <taxon>Magnoliopsida</taxon>
        <taxon>eudicotyledons</taxon>
        <taxon>Gunneridae</taxon>
        <taxon>Pentapetalae</taxon>
        <taxon>rosids</taxon>
        <taxon>malvids</taxon>
        <taxon>Brassicales</taxon>
        <taxon>Brassicaceae</taxon>
        <taxon>Camelineae</taxon>
        <taxon>Arabidopsis</taxon>
    </lineage>
</organism>
<reference key="1">
    <citation type="journal article" date="2000" name="DNA Res.">
        <title>Structural analysis of Arabidopsis thaliana chromosome 3. I. Sequence features of the regions of 4,504,864 bp covered by sixty P1 and TAC clones.</title>
        <authorList>
            <person name="Sato S."/>
            <person name="Nakamura Y."/>
            <person name="Kaneko T."/>
            <person name="Katoh T."/>
            <person name="Asamizu E."/>
            <person name="Tabata S."/>
        </authorList>
    </citation>
    <scope>NUCLEOTIDE SEQUENCE [LARGE SCALE GENOMIC DNA]</scope>
    <source>
        <strain>cv. Columbia</strain>
    </source>
</reference>
<reference key="2">
    <citation type="journal article" date="2017" name="Plant J.">
        <title>Araport11: a complete reannotation of the Arabidopsis thaliana reference genome.</title>
        <authorList>
            <person name="Cheng C.Y."/>
            <person name="Krishnakumar V."/>
            <person name="Chan A.P."/>
            <person name="Thibaud-Nissen F."/>
            <person name="Schobel S."/>
            <person name="Town C.D."/>
        </authorList>
    </citation>
    <scope>GENOME REANNOTATION</scope>
    <source>
        <strain>cv. Columbia</strain>
    </source>
</reference>
<reference key="3">
    <citation type="journal article" date="2003" name="Science">
        <title>Empirical analysis of transcriptional activity in the Arabidopsis genome.</title>
        <authorList>
            <person name="Yamada K."/>
            <person name="Lim J."/>
            <person name="Dale J.M."/>
            <person name="Chen H."/>
            <person name="Shinn P."/>
            <person name="Palm C.J."/>
            <person name="Southwick A.M."/>
            <person name="Wu H.C."/>
            <person name="Kim C.J."/>
            <person name="Nguyen M."/>
            <person name="Pham P.K."/>
            <person name="Cheuk R.F."/>
            <person name="Karlin-Newmann G."/>
            <person name="Liu S.X."/>
            <person name="Lam B."/>
            <person name="Sakano H."/>
            <person name="Wu T."/>
            <person name="Yu G."/>
            <person name="Miranda M."/>
            <person name="Quach H.L."/>
            <person name="Tripp M."/>
            <person name="Chang C.H."/>
            <person name="Lee J.M."/>
            <person name="Toriumi M.J."/>
            <person name="Chan M.M."/>
            <person name="Tang C.C."/>
            <person name="Onodera C.S."/>
            <person name="Deng J.M."/>
            <person name="Akiyama K."/>
            <person name="Ansari Y."/>
            <person name="Arakawa T."/>
            <person name="Banh J."/>
            <person name="Banno F."/>
            <person name="Bowser L."/>
            <person name="Brooks S.Y."/>
            <person name="Carninci P."/>
            <person name="Chao Q."/>
            <person name="Choy N."/>
            <person name="Enju A."/>
            <person name="Goldsmith A.D."/>
            <person name="Gurjal M."/>
            <person name="Hansen N.F."/>
            <person name="Hayashizaki Y."/>
            <person name="Johnson-Hopson C."/>
            <person name="Hsuan V.W."/>
            <person name="Iida K."/>
            <person name="Karnes M."/>
            <person name="Khan S."/>
            <person name="Koesema E."/>
            <person name="Ishida J."/>
            <person name="Jiang P.X."/>
            <person name="Jones T."/>
            <person name="Kawai J."/>
            <person name="Kamiya A."/>
            <person name="Meyers C."/>
            <person name="Nakajima M."/>
            <person name="Narusaka M."/>
            <person name="Seki M."/>
            <person name="Sakurai T."/>
            <person name="Satou M."/>
            <person name="Tamse R."/>
            <person name="Vaysberg M."/>
            <person name="Wallender E.K."/>
            <person name="Wong C."/>
            <person name="Yamamura Y."/>
            <person name="Yuan S."/>
            <person name="Shinozaki K."/>
            <person name="Davis R.W."/>
            <person name="Theologis A."/>
            <person name="Ecker J.R."/>
        </authorList>
    </citation>
    <scope>NUCLEOTIDE SEQUENCE [LARGE SCALE MRNA]</scope>
    <source>
        <strain>cv. Columbia</strain>
    </source>
</reference>
<reference key="4">
    <citation type="submission" date="2005-01" db="EMBL/GenBank/DDBJ databases">
        <title>Arabidopsis ORF clones.</title>
        <authorList>
            <person name="Shinn P."/>
            <person name="Chen H."/>
            <person name="Cheuk R.F."/>
            <person name="Kim C.J."/>
            <person name="Ecker J.R."/>
        </authorList>
    </citation>
    <scope>NUCLEOTIDE SEQUENCE [LARGE SCALE MRNA]</scope>
    <source>
        <strain>cv. Columbia</strain>
    </source>
</reference>
<reference key="5">
    <citation type="journal article" date="2005" name="Plant Physiol.">
        <title>Genome analysis and functional characterization of the E2 and RING-type E3 ligase ubiquitination enzymes of Arabidopsis.</title>
        <authorList>
            <person name="Kraft E."/>
            <person name="Stone S.L."/>
            <person name="Ma L."/>
            <person name="Su N."/>
            <person name="Gao Y."/>
            <person name="Lau O.-S."/>
            <person name="Deng X.-W."/>
            <person name="Callis J."/>
        </authorList>
    </citation>
    <scope>NUCLEOTIDE SEQUENCE [MRNA] OF 1-273</scope>
    <scope>TISSUE SPECIFICITY</scope>
    <scope>GENE FAMILY</scope>
    <scope>NOMENCLATURE</scope>
</reference>
<accession>Q9LSP7</accession>
<accession>Q4TYX9</accession>
<evidence type="ECO:0000250" key="1">
    <source>
        <dbReference type="UniProtKB" id="P42743"/>
    </source>
</evidence>
<evidence type="ECO:0000255" key="2"/>
<evidence type="ECO:0000255" key="3">
    <source>
        <dbReference type="PROSITE-ProRule" id="PRU00388"/>
    </source>
</evidence>
<evidence type="ECO:0000305" key="4"/>
<name>UBC32_ARATH</name>
<gene>
    <name type="primary">UBC32</name>
    <name type="ordered locus">At3g17000</name>
    <name type="ORF">K14A17.7</name>
</gene>
<comment type="function">
    <text evidence="1">Accepts the ubiquitin from the E1 complex and catalyzes its covalent attachment to other proteins.</text>
</comment>
<comment type="catalytic activity">
    <reaction evidence="3">
        <text>S-ubiquitinyl-[E1 ubiquitin-activating enzyme]-L-cysteine + [E2 ubiquitin-conjugating enzyme]-L-cysteine = [E1 ubiquitin-activating enzyme]-L-cysteine + S-ubiquitinyl-[E2 ubiquitin-conjugating enzyme]-L-cysteine.</text>
        <dbReference type="EC" id="2.3.2.23"/>
    </reaction>
</comment>
<comment type="pathway">
    <text evidence="3">Protein modification; protein ubiquitination.</text>
</comment>
<comment type="subcellular location">
    <subcellularLocation>
        <location evidence="4">Membrane</location>
        <topology evidence="4">Single-pass membrane protein</topology>
    </subcellularLocation>
</comment>
<comment type="similarity">
    <text evidence="3">Belongs to the ubiquitin-conjugating enzyme family.</text>
</comment>
<sequence length="309" mass="34322">MADERYNRKNPAVKRILQEVKEMQANPSDDFMSLPLEENIFEWQFAIRGPGDTEFEGGIYHGRIQLPADYPFKPPSFMLLTPNGRFETNTKICLSISNYHPEHWQPSWSVRTALVALIAFMPTSPNGALGSVDYPKDERRTLAIKSRETPPKYGSPERQKIIDEIHQYILSKATVVPKPLPLECSQAPSIVSEAHSQVEPQEAITVVEERSIATTDTIVDDQIIEETAEAVNTAASVVPAAAPLPAVEVVVKASVSGEQRMARRAAQKPVDDRLFTWAAVGLTIAIMVLLLKKFIKSNGYSTGFMDDQS</sequence>
<keyword id="KW-0067">ATP-binding</keyword>
<keyword id="KW-0472">Membrane</keyword>
<keyword id="KW-0547">Nucleotide-binding</keyword>
<keyword id="KW-1185">Reference proteome</keyword>
<keyword id="KW-0808">Transferase</keyword>
<keyword id="KW-0812">Transmembrane</keyword>
<keyword id="KW-1133">Transmembrane helix</keyword>
<keyword id="KW-0833">Ubl conjugation pathway</keyword>